<accession>A7HDA9</accession>
<reference key="1">
    <citation type="journal article" date="2015" name="Genome Announc.">
        <title>Complete genome sequence of Anaeromyxobacter sp. Fw109-5, an anaerobic, metal-reducing bacterium isolated from a contaminated subsurface environment.</title>
        <authorList>
            <person name="Hwang C."/>
            <person name="Copeland A."/>
            <person name="Lucas S."/>
            <person name="Lapidus A."/>
            <person name="Barry K."/>
            <person name="Glavina Del Rio T."/>
            <person name="Dalin E."/>
            <person name="Tice H."/>
            <person name="Pitluck S."/>
            <person name="Sims D."/>
            <person name="Brettin T."/>
            <person name="Bruce D.C."/>
            <person name="Detter J.C."/>
            <person name="Han C.S."/>
            <person name="Schmutz J."/>
            <person name="Larimer F.W."/>
            <person name="Land M.L."/>
            <person name="Hauser L.J."/>
            <person name="Kyrpides N."/>
            <person name="Lykidis A."/>
            <person name="Richardson P."/>
            <person name="Belieav A."/>
            <person name="Sanford R.A."/>
            <person name="Loeffler F.E."/>
            <person name="Fields M.W."/>
        </authorList>
    </citation>
    <scope>NUCLEOTIDE SEQUENCE [LARGE SCALE GENOMIC DNA]</scope>
    <source>
        <strain>Fw109-5</strain>
    </source>
</reference>
<sequence>MPNVVVVGAQWGDEGKGKIVDLLTEHADVVVRFQGGNNAGHTLVVNGEKTVLHLIPAGILHPGKSCVIGNGVVFDPEVFVMEVDRLKSRNALADDSQLVVSLDAHVIMPWHKAIDIAREQAMGAGKIGTTGRGIGPTYEDKVARRGLRIRDLLDAARLERKVKERLPAAREELSRLGATPELDEAAIVARYSELGRRVARYAADVSLWLHRALQNGKQLLFEGAQGTMLDVDHGTYPFVTSSNTVAGNAVVGCGLGPTAVDYVLGISKAYSTRVGGGPYPSELKDETGERLRKIGGEFGATTGRPRRTGWLDALALRYAARVNGLHGIAMTKLDVLAGFETVKIAVGYRVDGKVLDEMPSDPELLERAEAVYEELPGWTEKLEDLRSWDDLPPRARAYVKRVEQLVGVPVVGLSVGADRGQTILLENPFRA</sequence>
<name>PURA_ANADF</name>
<protein>
    <recommendedName>
        <fullName evidence="1">Adenylosuccinate synthetase</fullName>
        <shortName evidence="1">AMPSase</shortName>
        <shortName evidence="1">AdSS</shortName>
        <ecNumber evidence="1">6.3.4.4</ecNumber>
    </recommendedName>
    <alternativeName>
        <fullName evidence="1">IMP--aspartate ligase</fullName>
    </alternativeName>
</protein>
<evidence type="ECO:0000255" key="1">
    <source>
        <dbReference type="HAMAP-Rule" id="MF_00011"/>
    </source>
</evidence>
<organism>
    <name type="scientific">Anaeromyxobacter sp. (strain Fw109-5)</name>
    <dbReference type="NCBI Taxonomy" id="404589"/>
    <lineage>
        <taxon>Bacteria</taxon>
        <taxon>Pseudomonadati</taxon>
        <taxon>Myxococcota</taxon>
        <taxon>Myxococcia</taxon>
        <taxon>Myxococcales</taxon>
        <taxon>Cystobacterineae</taxon>
        <taxon>Anaeromyxobacteraceae</taxon>
        <taxon>Anaeromyxobacter</taxon>
    </lineage>
</organism>
<dbReference type="EC" id="6.3.4.4" evidence="1"/>
<dbReference type="EMBL" id="CP000769">
    <property type="protein sequence ID" value="ABS26705.1"/>
    <property type="molecule type" value="Genomic_DNA"/>
</dbReference>
<dbReference type="RefSeq" id="WP_012097297.1">
    <property type="nucleotide sequence ID" value="NC_009675.1"/>
</dbReference>
<dbReference type="SMR" id="A7HDA9"/>
<dbReference type="STRING" id="404589.Anae109_2504"/>
<dbReference type="KEGG" id="afw:Anae109_2504"/>
<dbReference type="eggNOG" id="COG0104">
    <property type="taxonomic scope" value="Bacteria"/>
</dbReference>
<dbReference type="HOGENOM" id="CLU_029848_0_0_7"/>
<dbReference type="OrthoDB" id="9807553at2"/>
<dbReference type="UniPathway" id="UPA00075">
    <property type="reaction ID" value="UER00335"/>
</dbReference>
<dbReference type="Proteomes" id="UP000006382">
    <property type="component" value="Chromosome"/>
</dbReference>
<dbReference type="GO" id="GO:0005737">
    <property type="term" value="C:cytoplasm"/>
    <property type="evidence" value="ECO:0007669"/>
    <property type="project" value="UniProtKB-SubCell"/>
</dbReference>
<dbReference type="GO" id="GO:0004019">
    <property type="term" value="F:adenylosuccinate synthase activity"/>
    <property type="evidence" value="ECO:0007669"/>
    <property type="project" value="UniProtKB-UniRule"/>
</dbReference>
<dbReference type="GO" id="GO:0005525">
    <property type="term" value="F:GTP binding"/>
    <property type="evidence" value="ECO:0007669"/>
    <property type="project" value="UniProtKB-UniRule"/>
</dbReference>
<dbReference type="GO" id="GO:0000287">
    <property type="term" value="F:magnesium ion binding"/>
    <property type="evidence" value="ECO:0007669"/>
    <property type="project" value="UniProtKB-UniRule"/>
</dbReference>
<dbReference type="GO" id="GO:0044208">
    <property type="term" value="P:'de novo' AMP biosynthetic process"/>
    <property type="evidence" value="ECO:0007669"/>
    <property type="project" value="UniProtKB-UniRule"/>
</dbReference>
<dbReference type="GO" id="GO:0046040">
    <property type="term" value="P:IMP metabolic process"/>
    <property type="evidence" value="ECO:0007669"/>
    <property type="project" value="TreeGrafter"/>
</dbReference>
<dbReference type="CDD" id="cd03108">
    <property type="entry name" value="AdSS"/>
    <property type="match status" value="1"/>
</dbReference>
<dbReference type="FunFam" id="1.10.300.10:FF:000001">
    <property type="entry name" value="Adenylosuccinate synthetase"/>
    <property type="match status" value="1"/>
</dbReference>
<dbReference type="FunFam" id="3.90.170.10:FF:000001">
    <property type="entry name" value="Adenylosuccinate synthetase"/>
    <property type="match status" value="1"/>
</dbReference>
<dbReference type="Gene3D" id="3.40.440.10">
    <property type="entry name" value="Adenylosuccinate Synthetase, subunit A, domain 1"/>
    <property type="match status" value="1"/>
</dbReference>
<dbReference type="Gene3D" id="1.10.300.10">
    <property type="entry name" value="Adenylosuccinate Synthetase, subunit A, domain 2"/>
    <property type="match status" value="1"/>
</dbReference>
<dbReference type="Gene3D" id="3.90.170.10">
    <property type="entry name" value="Adenylosuccinate Synthetase, subunit A, domain 3"/>
    <property type="match status" value="1"/>
</dbReference>
<dbReference type="HAMAP" id="MF_00011">
    <property type="entry name" value="Adenylosucc_synth"/>
    <property type="match status" value="1"/>
</dbReference>
<dbReference type="InterPro" id="IPR018220">
    <property type="entry name" value="Adenylosuccin_syn_GTP-bd"/>
</dbReference>
<dbReference type="InterPro" id="IPR033128">
    <property type="entry name" value="Adenylosuccin_syn_Lys_AS"/>
</dbReference>
<dbReference type="InterPro" id="IPR042109">
    <property type="entry name" value="Adenylosuccinate_synth_dom1"/>
</dbReference>
<dbReference type="InterPro" id="IPR042110">
    <property type="entry name" value="Adenylosuccinate_synth_dom2"/>
</dbReference>
<dbReference type="InterPro" id="IPR042111">
    <property type="entry name" value="Adenylosuccinate_synth_dom3"/>
</dbReference>
<dbReference type="InterPro" id="IPR001114">
    <property type="entry name" value="Adenylosuccinate_synthetase"/>
</dbReference>
<dbReference type="InterPro" id="IPR027417">
    <property type="entry name" value="P-loop_NTPase"/>
</dbReference>
<dbReference type="NCBIfam" id="NF002223">
    <property type="entry name" value="PRK01117.1"/>
    <property type="match status" value="1"/>
</dbReference>
<dbReference type="NCBIfam" id="TIGR00184">
    <property type="entry name" value="purA"/>
    <property type="match status" value="1"/>
</dbReference>
<dbReference type="PANTHER" id="PTHR11846">
    <property type="entry name" value="ADENYLOSUCCINATE SYNTHETASE"/>
    <property type="match status" value="1"/>
</dbReference>
<dbReference type="PANTHER" id="PTHR11846:SF0">
    <property type="entry name" value="ADENYLOSUCCINATE SYNTHETASE"/>
    <property type="match status" value="1"/>
</dbReference>
<dbReference type="Pfam" id="PF00709">
    <property type="entry name" value="Adenylsucc_synt"/>
    <property type="match status" value="1"/>
</dbReference>
<dbReference type="SMART" id="SM00788">
    <property type="entry name" value="Adenylsucc_synt"/>
    <property type="match status" value="1"/>
</dbReference>
<dbReference type="SUPFAM" id="SSF52540">
    <property type="entry name" value="P-loop containing nucleoside triphosphate hydrolases"/>
    <property type="match status" value="1"/>
</dbReference>
<dbReference type="PROSITE" id="PS01266">
    <property type="entry name" value="ADENYLOSUCCIN_SYN_1"/>
    <property type="match status" value="1"/>
</dbReference>
<dbReference type="PROSITE" id="PS00513">
    <property type="entry name" value="ADENYLOSUCCIN_SYN_2"/>
    <property type="match status" value="1"/>
</dbReference>
<feature type="chain" id="PRO_1000000774" description="Adenylosuccinate synthetase">
    <location>
        <begin position="1"/>
        <end position="431"/>
    </location>
</feature>
<feature type="active site" description="Proton acceptor" evidence="1">
    <location>
        <position position="13"/>
    </location>
</feature>
<feature type="active site" description="Proton donor" evidence="1">
    <location>
        <position position="41"/>
    </location>
</feature>
<feature type="binding site" evidence="1">
    <location>
        <begin position="12"/>
        <end position="18"/>
    </location>
    <ligand>
        <name>GTP</name>
        <dbReference type="ChEBI" id="CHEBI:37565"/>
    </ligand>
</feature>
<feature type="binding site" description="in other chain" evidence="1">
    <location>
        <begin position="13"/>
        <end position="16"/>
    </location>
    <ligand>
        <name>IMP</name>
        <dbReference type="ChEBI" id="CHEBI:58053"/>
        <note>ligand shared between dimeric partners</note>
    </ligand>
</feature>
<feature type="binding site" evidence="1">
    <location>
        <position position="13"/>
    </location>
    <ligand>
        <name>Mg(2+)</name>
        <dbReference type="ChEBI" id="CHEBI:18420"/>
    </ligand>
</feature>
<feature type="binding site" description="in other chain" evidence="1">
    <location>
        <begin position="38"/>
        <end position="41"/>
    </location>
    <ligand>
        <name>IMP</name>
        <dbReference type="ChEBI" id="CHEBI:58053"/>
        <note>ligand shared between dimeric partners</note>
    </ligand>
</feature>
<feature type="binding site" evidence="1">
    <location>
        <begin position="40"/>
        <end position="42"/>
    </location>
    <ligand>
        <name>GTP</name>
        <dbReference type="ChEBI" id="CHEBI:37565"/>
    </ligand>
</feature>
<feature type="binding site" evidence="1">
    <location>
        <position position="40"/>
    </location>
    <ligand>
        <name>Mg(2+)</name>
        <dbReference type="ChEBI" id="CHEBI:18420"/>
    </ligand>
</feature>
<feature type="binding site" description="in other chain" evidence="1">
    <location>
        <position position="130"/>
    </location>
    <ligand>
        <name>IMP</name>
        <dbReference type="ChEBI" id="CHEBI:58053"/>
        <note>ligand shared between dimeric partners</note>
    </ligand>
</feature>
<feature type="binding site" evidence="1">
    <location>
        <position position="144"/>
    </location>
    <ligand>
        <name>IMP</name>
        <dbReference type="ChEBI" id="CHEBI:58053"/>
        <note>ligand shared between dimeric partners</note>
    </ligand>
</feature>
<feature type="binding site" description="in other chain" evidence="1">
    <location>
        <position position="225"/>
    </location>
    <ligand>
        <name>IMP</name>
        <dbReference type="ChEBI" id="CHEBI:58053"/>
        <note>ligand shared between dimeric partners</note>
    </ligand>
</feature>
<feature type="binding site" description="in other chain" evidence="1">
    <location>
        <position position="240"/>
    </location>
    <ligand>
        <name>IMP</name>
        <dbReference type="ChEBI" id="CHEBI:58053"/>
        <note>ligand shared between dimeric partners</note>
    </ligand>
</feature>
<feature type="binding site" evidence="1">
    <location>
        <begin position="300"/>
        <end position="306"/>
    </location>
    <ligand>
        <name>substrate</name>
    </ligand>
</feature>
<feature type="binding site" description="in other chain" evidence="1">
    <location>
        <position position="304"/>
    </location>
    <ligand>
        <name>IMP</name>
        <dbReference type="ChEBI" id="CHEBI:58053"/>
        <note>ligand shared between dimeric partners</note>
    </ligand>
</feature>
<feature type="binding site" evidence="1">
    <location>
        <position position="306"/>
    </location>
    <ligand>
        <name>GTP</name>
        <dbReference type="ChEBI" id="CHEBI:37565"/>
    </ligand>
</feature>
<feature type="binding site" evidence="1">
    <location>
        <begin position="332"/>
        <end position="334"/>
    </location>
    <ligand>
        <name>GTP</name>
        <dbReference type="ChEBI" id="CHEBI:37565"/>
    </ligand>
</feature>
<feature type="binding site" evidence="1">
    <location>
        <begin position="414"/>
        <end position="416"/>
    </location>
    <ligand>
        <name>GTP</name>
        <dbReference type="ChEBI" id="CHEBI:37565"/>
    </ligand>
</feature>
<proteinExistence type="inferred from homology"/>
<comment type="function">
    <text evidence="1">Plays an important role in the de novo pathway of purine nucleotide biosynthesis. Catalyzes the first committed step in the biosynthesis of AMP from IMP.</text>
</comment>
<comment type="catalytic activity">
    <reaction evidence="1">
        <text>IMP + L-aspartate + GTP = N(6)-(1,2-dicarboxyethyl)-AMP + GDP + phosphate + 2 H(+)</text>
        <dbReference type="Rhea" id="RHEA:15753"/>
        <dbReference type="ChEBI" id="CHEBI:15378"/>
        <dbReference type="ChEBI" id="CHEBI:29991"/>
        <dbReference type="ChEBI" id="CHEBI:37565"/>
        <dbReference type="ChEBI" id="CHEBI:43474"/>
        <dbReference type="ChEBI" id="CHEBI:57567"/>
        <dbReference type="ChEBI" id="CHEBI:58053"/>
        <dbReference type="ChEBI" id="CHEBI:58189"/>
        <dbReference type="EC" id="6.3.4.4"/>
    </reaction>
</comment>
<comment type="cofactor">
    <cofactor evidence="1">
        <name>Mg(2+)</name>
        <dbReference type="ChEBI" id="CHEBI:18420"/>
    </cofactor>
    <text evidence="1">Binds 1 Mg(2+) ion per subunit.</text>
</comment>
<comment type="pathway">
    <text evidence="1">Purine metabolism; AMP biosynthesis via de novo pathway; AMP from IMP: step 1/2.</text>
</comment>
<comment type="subunit">
    <text evidence="1">Homodimer.</text>
</comment>
<comment type="subcellular location">
    <subcellularLocation>
        <location evidence="1">Cytoplasm</location>
    </subcellularLocation>
</comment>
<comment type="similarity">
    <text evidence="1">Belongs to the adenylosuccinate synthetase family.</text>
</comment>
<keyword id="KW-0963">Cytoplasm</keyword>
<keyword id="KW-0342">GTP-binding</keyword>
<keyword id="KW-0436">Ligase</keyword>
<keyword id="KW-0460">Magnesium</keyword>
<keyword id="KW-0479">Metal-binding</keyword>
<keyword id="KW-0547">Nucleotide-binding</keyword>
<keyword id="KW-0658">Purine biosynthesis</keyword>
<keyword id="KW-1185">Reference proteome</keyword>
<gene>
    <name evidence="1" type="primary">purA</name>
    <name type="ordered locus">Anae109_2504</name>
</gene>